<evidence type="ECO:0000250" key="1"/>
<evidence type="ECO:0000256" key="2">
    <source>
        <dbReference type="SAM" id="MobiDB-lite"/>
    </source>
</evidence>
<evidence type="ECO:0000305" key="3"/>
<sequence length="934" mass="101900">MSQEHPEQGSSSKRRVYPQQQYDFAAAQPAGYSMPDPTQPYGASASPSAAMYGGAHAIPSPAAFQPHTANVQSGAFAPPPGTPGSAVDPPVAPGVAGGMAYGAPQAAGAAYGYQGLTNQMGNLNIGGGGAYQGGAPPGAAGGAHMAAPTQLNQIYNTDLLQNFPPPISDLTLPPPPVILPPGSSVTGNPDPNADSEFMRCTLNTVPTSSSLLKKSKLPFALVIRPYTALRDADENVPTVADTTIARCRRCRSYINPYVVFLEGGARWRCNMCNLTNDVPSGFDYDAVANKPRDRWSRAELNHSVVEFVAPAEYMVRPPQPLVYVFVLDVSVHSVKNGLLATAARTIKESLSRIPNVDNRTRVGFLAVDSSLHYFAIPRKEDVAEGEGEEGEENEWPEPRMMVVSDIDDPFLPMPTDLLVNLSQCKGGIEKLLDSLQSMFAHTVNPASALGSAVVAAHKLIANIGGKIVCLTSTLPNVGQGKLEVRDDKKALGTSREGQMLQTASTFYKSFAVECSKTQVTVDMFLFSSHYQDVASLSNLPRFSAGQTYFYPGWIASNPEDANKFALEFSEYLSQELATEAVLRVRSCDGIRMSAFYGNFFSRSSDLCSFSTFPRDQSYVIEVNIEETIVKPWVTFQAAILHSTASGERRIRVITRAFPTSALLQDIYASADQIAITTYLANKAVEKALQKGPQDARDLLMNRLNEMFTCYKKDLMTTNVGASAPLQFCTNLRMLPLLVNALIKHIGFRKTSQIPSDLRSAALCLLSTLPDKYLIQYIYPNFYNLIFMPDEAGLPDAETGQIVMPPCTNLSGEHLISHGLFLIDDGQVMFLWVGRDAQPALLQDVFGVSSITEVPTGKTELPVLDNQFNERIRNIISKAREKTDAITYQHLYVVREDGEPALRLWATTHLVEDRVEQSGVTYHQFLTSIREKLNS</sequence>
<dbReference type="EMBL" id="CR382132">
    <property type="protein sequence ID" value="CAG77835.1"/>
    <property type="molecule type" value="Genomic_DNA"/>
</dbReference>
<dbReference type="RefSeq" id="XP_505028.1">
    <property type="nucleotide sequence ID" value="XM_505028.1"/>
</dbReference>
<dbReference type="SMR" id="Q6C2T4"/>
<dbReference type="FunCoup" id="Q6C2T4">
    <property type="interactions" value="885"/>
</dbReference>
<dbReference type="STRING" id="284591.Q6C2T4"/>
<dbReference type="EnsemblFungi" id="CAG77835">
    <property type="protein sequence ID" value="CAG77835"/>
    <property type="gene ID" value="YALI0_F05324g"/>
</dbReference>
<dbReference type="KEGG" id="yli:2908193"/>
<dbReference type="VEuPathDB" id="FungiDB:YALI0_F05324g"/>
<dbReference type="HOGENOM" id="CLU_004589_2_1_1"/>
<dbReference type="InParanoid" id="Q6C2T4"/>
<dbReference type="OMA" id="AVECSKQ"/>
<dbReference type="OrthoDB" id="92858at4891"/>
<dbReference type="Proteomes" id="UP000001300">
    <property type="component" value="Chromosome F"/>
</dbReference>
<dbReference type="GO" id="GO:0005801">
    <property type="term" value="C:cis-Golgi network"/>
    <property type="evidence" value="ECO:0007669"/>
    <property type="project" value="EnsemblFungi"/>
</dbReference>
<dbReference type="GO" id="GO:0030127">
    <property type="term" value="C:COPII vesicle coat"/>
    <property type="evidence" value="ECO:0000318"/>
    <property type="project" value="GO_Central"/>
</dbReference>
<dbReference type="GO" id="GO:0070971">
    <property type="term" value="C:endoplasmic reticulum exit site"/>
    <property type="evidence" value="ECO:0000318"/>
    <property type="project" value="GO_Central"/>
</dbReference>
<dbReference type="GO" id="GO:0005789">
    <property type="term" value="C:endoplasmic reticulum membrane"/>
    <property type="evidence" value="ECO:0007669"/>
    <property type="project" value="UniProtKB-SubCell"/>
</dbReference>
<dbReference type="GO" id="GO:1990753">
    <property type="term" value="C:equatorial cell cortex"/>
    <property type="evidence" value="ECO:0007669"/>
    <property type="project" value="EnsemblFungi"/>
</dbReference>
<dbReference type="GO" id="GO:0000139">
    <property type="term" value="C:Golgi membrane"/>
    <property type="evidence" value="ECO:0007669"/>
    <property type="project" value="UniProtKB-SubCell"/>
</dbReference>
<dbReference type="GO" id="GO:0000149">
    <property type="term" value="F:SNARE binding"/>
    <property type="evidence" value="ECO:0000318"/>
    <property type="project" value="GO_Central"/>
</dbReference>
<dbReference type="GO" id="GO:0008270">
    <property type="term" value="F:zinc ion binding"/>
    <property type="evidence" value="ECO:0000318"/>
    <property type="project" value="GO_Central"/>
</dbReference>
<dbReference type="GO" id="GO:0090110">
    <property type="term" value="P:COPII-coated vesicle cargo loading"/>
    <property type="evidence" value="ECO:0000318"/>
    <property type="project" value="GO_Central"/>
</dbReference>
<dbReference type="GO" id="GO:0006886">
    <property type="term" value="P:intracellular protein transport"/>
    <property type="evidence" value="ECO:0007669"/>
    <property type="project" value="InterPro"/>
</dbReference>
<dbReference type="CDD" id="cd01479">
    <property type="entry name" value="Sec24-like"/>
    <property type="match status" value="1"/>
</dbReference>
<dbReference type="Gene3D" id="2.60.40.1670">
    <property type="entry name" value="beta-sandwich domain of Sec23/24"/>
    <property type="match status" value="1"/>
</dbReference>
<dbReference type="Gene3D" id="1.20.120.730">
    <property type="entry name" value="Sec23/Sec24 helical domain"/>
    <property type="match status" value="1"/>
</dbReference>
<dbReference type="Gene3D" id="3.40.20.10">
    <property type="entry name" value="Severin"/>
    <property type="match status" value="1"/>
</dbReference>
<dbReference type="Gene3D" id="3.40.50.410">
    <property type="entry name" value="von Willebrand factor, type A domain"/>
    <property type="match status" value="1"/>
</dbReference>
<dbReference type="Gene3D" id="2.30.30.380">
    <property type="entry name" value="Zn-finger domain of Sec23/24"/>
    <property type="match status" value="1"/>
</dbReference>
<dbReference type="InterPro" id="IPR029006">
    <property type="entry name" value="ADF-H/Gelsolin-like_dom_sf"/>
</dbReference>
<dbReference type="InterPro" id="IPR007123">
    <property type="entry name" value="Gelsolin-like_dom"/>
</dbReference>
<dbReference type="InterPro" id="IPR036180">
    <property type="entry name" value="Gelsolin-like_dom_sf"/>
</dbReference>
<dbReference type="InterPro" id="IPR006900">
    <property type="entry name" value="Sec23/24_helical_dom"/>
</dbReference>
<dbReference type="InterPro" id="IPR036175">
    <property type="entry name" value="Sec23/24_helical_dom_sf"/>
</dbReference>
<dbReference type="InterPro" id="IPR006896">
    <property type="entry name" value="Sec23/24_trunk_dom"/>
</dbReference>
<dbReference type="InterPro" id="IPR012990">
    <property type="entry name" value="Sec23_24_beta_S"/>
</dbReference>
<dbReference type="InterPro" id="IPR050550">
    <property type="entry name" value="SEC23_SEC24_subfamily"/>
</dbReference>
<dbReference type="InterPro" id="IPR041742">
    <property type="entry name" value="Sec24-like_trunk_dom"/>
</dbReference>
<dbReference type="InterPro" id="IPR036465">
    <property type="entry name" value="vWFA_dom_sf"/>
</dbReference>
<dbReference type="InterPro" id="IPR006895">
    <property type="entry name" value="Znf_Sec23_Sec24"/>
</dbReference>
<dbReference type="InterPro" id="IPR036174">
    <property type="entry name" value="Znf_Sec23_Sec24_sf"/>
</dbReference>
<dbReference type="PANTHER" id="PTHR13803">
    <property type="entry name" value="SEC24-RELATED PROTEIN"/>
    <property type="match status" value="1"/>
</dbReference>
<dbReference type="PANTHER" id="PTHR13803:SF39">
    <property type="entry name" value="SECRETORY 24AB, ISOFORM A"/>
    <property type="match status" value="1"/>
</dbReference>
<dbReference type="Pfam" id="PF00626">
    <property type="entry name" value="Gelsolin"/>
    <property type="match status" value="1"/>
</dbReference>
<dbReference type="Pfam" id="PF08033">
    <property type="entry name" value="Sec23_BS"/>
    <property type="match status" value="1"/>
</dbReference>
<dbReference type="Pfam" id="PF04815">
    <property type="entry name" value="Sec23_helical"/>
    <property type="match status" value="1"/>
</dbReference>
<dbReference type="Pfam" id="PF04811">
    <property type="entry name" value="Sec23_trunk"/>
    <property type="match status" value="1"/>
</dbReference>
<dbReference type="Pfam" id="PF04810">
    <property type="entry name" value="zf-Sec23_Sec24"/>
    <property type="match status" value="1"/>
</dbReference>
<dbReference type="SUPFAM" id="SSF81995">
    <property type="entry name" value="beta-sandwich domain of Sec23/24"/>
    <property type="match status" value="1"/>
</dbReference>
<dbReference type="SUPFAM" id="SSF82754">
    <property type="entry name" value="C-terminal, gelsolin-like domain of Sec23/24"/>
    <property type="match status" value="1"/>
</dbReference>
<dbReference type="SUPFAM" id="SSF81811">
    <property type="entry name" value="Helical domain of Sec23/24"/>
    <property type="match status" value="1"/>
</dbReference>
<dbReference type="SUPFAM" id="SSF53300">
    <property type="entry name" value="vWA-like"/>
    <property type="match status" value="1"/>
</dbReference>
<dbReference type="SUPFAM" id="SSF82919">
    <property type="entry name" value="Zn-finger domain of Sec23/24"/>
    <property type="match status" value="1"/>
</dbReference>
<reference key="1">
    <citation type="journal article" date="2004" name="Nature">
        <title>Genome evolution in yeasts.</title>
        <authorList>
            <person name="Dujon B."/>
            <person name="Sherman D."/>
            <person name="Fischer G."/>
            <person name="Durrens P."/>
            <person name="Casaregola S."/>
            <person name="Lafontaine I."/>
            <person name="de Montigny J."/>
            <person name="Marck C."/>
            <person name="Neuveglise C."/>
            <person name="Talla E."/>
            <person name="Goffard N."/>
            <person name="Frangeul L."/>
            <person name="Aigle M."/>
            <person name="Anthouard V."/>
            <person name="Babour A."/>
            <person name="Barbe V."/>
            <person name="Barnay S."/>
            <person name="Blanchin S."/>
            <person name="Beckerich J.-M."/>
            <person name="Beyne E."/>
            <person name="Bleykasten C."/>
            <person name="Boisrame A."/>
            <person name="Boyer J."/>
            <person name="Cattolico L."/>
            <person name="Confanioleri F."/>
            <person name="de Daruvar A."/>
            <person name="Despons L."/>
            <person name="Fabre E."/>
            <person name="Fairhead C."/>
            <person name="Ferry-Dumazet H."/>
            <person name="Groppi A."/>
            <person name="Hantraye F."/>
            <person name="Hennequin C."/>
            <person name="Jauniaux N."/>
            <person name="Joyet P."/>
            <person name="Kachouri R."/>
            <person name="Kerrest A."/>
            <person name="Koszul R."/>
            <person name="Lemaire M."/>
            <person name="Lesur I."/>
            <person name="Ma L."/>
            <person name="Muller H."/>
            <person name="Nicaud J.-M."/>
            <person name="Nikolski M."/>
            <person name="Oztas S."/>
            <person name="Ozier-Kalogeropoulos O."/>
            <person name="Pellenz S."/>
            <person name="Potier S."/>
            <person name="Richard G.-F."/>
            <person name="Straub M.-L."/>
            <person name="Suleau A."/>
            <person name="Swennen D."/>
            <person name="Tekaia F."/>
            <person name="Wesolowski-Louvel M."/>
            <person name="Westhof E."/>
            <person name="Wirth B."/>
            <person name="Zeniou-Meyer M."/>
            <person name="Zivanovic Y."/>
            <person name="Bolotin-Fukuhara M."/>
            <person name="Thierry A."/>
            <person name="Bouchier C."/>
            <person name="Caudron B."/>
            <person name="Scarpelli C."/>
            <person name="Gaillardin C."/>
            <person name="Weissenbach J."/>
            <person name="Wincker P."/>
            <person name="Souciet J.-L."/>
        </authorList>
    </citation>
    <scope>NUCLEOTIDE SEQUENCE [LARGE SCALE GENOMIC DNA]</scope>
    <source>
        <strain>CLIB 122 / E 150</strain>
    </source>
</reference>
<accession>Q6C2T4</accession>
<name>SEC24_YARLI</name>
<protein>
    <recommendedName>
        <fullName>Protein transport protein SEC24</fullName>
    </recommendedName>
</protein>
<proteinExistence type="inferred from homology"/>
<feature type="chain" id="PRO_0000295504" description="Protein transport protein SEC24">
    <location>
        <begin position="1"/>
        <end position="934"/>
    </location>
</feature>
<feature type="region of interest" description="Disordered" evidence="2">
    <location>
        <begin position="1"/>
        <end position="56"/>
    </location>
</feature>
<feature type="region of interest" description="Disordered" evidence="2">
    <location>
        <begin position="70"/>
        <end position="89"/>
    </location>
</feature>
<feature type="region of interest" description="Zinc finger-like">
    <location>
        <begin position="247"/>
        <end position="272"/>
    </location>
</feature>
<feature type="binding site" evidence="1">
    <location>
        <position position="247"/>
    </location>
    <ligand>
        <name>Zn(2+)</name>
        <dbReference type="ChEBI" id="CHEBI:29105"/>
    </ligand>
</feature>
<feature type="binding site" evidence="1">
    <location>
        <position position="250"/>
    </location>
    <ligand>
        <name>Zn(2+)</name>
        <dbReference type="ChEBI" id="CHEBI:29105"/>
    </ligand>
</feature>
<feature type="binding site" evidence="1">
    <location>
        <position position="269"/>
    </location>
    <ligand>
        <name>Zn(2+)</name>
        <dbReference type="ChEBI" id="CHEBI:29105"/>
    </ligand>
</feature>
<feature type="binding site" evidence="1">
    <location>
        <position position="272"/>
    </location>
    <ligand>
        <name>Zn(2+)</name>
        <dbReference type="ChEBI" id="CHEBI:29105"/>
    </ligand>
</feature>
<comment type="function">
    <text evidence="1">Component of the coat protein complex II (COPII) which promotes the formation of transport vesicles from the endoplasmic reticulum (ER). The coat has two main functions, the physical deformation of the endoplasmic reticulum membrane into vesicles and the selection of cargo molecules (By similarity).</text>
</comment>
<comment type="subunit">
    <text evidence="1">The COPII coat is composed of at least 5 proteins: the SEC23/24 complex, the SEC13/31 complex, and the protein SAR1. Golgi apparatus membrane; Peripheral membrane protein; Cytoplasmic side.</text>
</comment>
<comment type="subcellular location">
    <subcellularLocation>
        <location evidence="1">Cytoplasm</location>
    </subcellularLocation>
    <subcellularLocation>
        <location evidence="1">Cytoplasmic vesicle</location>
        <location evidence="1">COPII-coated vesicle membrane</location>
        <topology evidence="1">Peripheral membrane protein</topology>
        <orientation evidence="1">Cytoplasmic side</orientation>
    </subcellularLocation>
    <subcellularLocation>
        <location evidence="1">Endoplasmic reticulum membrane</location>
        <topology evidence="1">Peripheral membrane protein</topology>
        <orientation evidence="1">Cytoplasmic side</orientation>
    </subcellularLocation>
    <subcellularLocation>
        <location evidence="1">Golgi apparatus membrane</location>
        <topology evidence="1">Peripheral membrane protein</topology>
        <orientation evidence="1">Cytoplasmic side</orientation>
    </subcellularLocation>
</comment>
<comment type="similarity">
    <text evidence="3">Belongs to the SEC23/SEC24 family. SEC24 subfamily.</text>
</comment>
<keyword id="KW-0963">Cytoplasm</keyword>
<keyword id="KW-0968">Cytoplasmic vesicle</keyword>
<keyword id="KW-0256">Endoplasmic reticulum</keyword>
<keyword id="KW-0931">ER-Golgi transport</keyword>
<keyword id="KW-0333">Golgi apparatus</keyword>
<keyword id="KW-0472">Membrane</keyword>
<keyword id="KW-0479">Metal-binding</keyword>
<keyword id="KW-0653">Protein transport</keyword>
<keyword id="KW-1185">Reference proteome</keyword>
<keyword id="KW-0813">Transport</keyword>
<keyword id="KW-0862">Zinc</keyword>
<gene>
    <name type="primary">SEC24</name>
    <name type="ordered locus">YALI0F05324g</name>
</gene>
<organism>
    <name type="scientific">Yarrowia lipolytica (strain CLIB 122 / E 150)</name>
    <name type="common">Yeast</name>
    <name type="synonym">Candida lipolytica</name>
    <dbReference type="NCBI Taxonomy" id="284591"/>
    <lineage>
        <taxon>Eukaryota</taxon>
        <taxon>Fungi</taxon>
        <taxon>Dikarya</taxon>
        <taxon>Ascomycota</taxon>
        <taxon>Saccharomycotina</taxon>
        <taxon>Dipodascomycetes</taxon>
        <taxon>Dipodascales</taxon>
        <taxon>Dipodascales incertae sedis</taxon>
        <taxon>Yarrowia</taxon>
    </lineage>
</organism>